<evidence type="ECO:0000250" key="1">
    <source>
        <dbReference type="UniProtKB" id="Q58A45"/>
    </source>
</evidence>
<evidence type="ECO:0000255" key="2">
    <source>
        <dbReference type="HAMAP-Rule" id="MF_03181"/>
    </source>
</evidence>
<evidence type="ECO:0000256" key="3">
    <source>
        <dbReference type="SAM" id="MobiDB-lite"/>
    </source>
</evidence>
<evidence type="ECO:0000269" key="4">
    <source>
    </source>
</evidence>
<evidence type="ECO:0000269" key="5">
    <source>
    </source>
</evidence>
<evidence type="ECO:0000303" key="6">
    <source>
    </source>
</evidence>
<evidence type="ECO:0000305" key="7"/>
<evidence type="ECO:0007744" key="8">
    <source>
    </source>
</evidence>
<protein>
    <recommendedName>
        <fullName evidence="2">PAN2-PAN3 deadenylation complex subunit Pan3</fullName>
    </recommendedName>
    <alternativeName>
        <fullName evidence="2">PAB1P-dependent poly(A)-specific ribonuclease</fullName>
    </alternativeName>
    <alternativeName>
        <fullName evidence="2">Poly(A)-nuclease deadenylation complex subunit 3</fullName>
        <shortName evidence="2">PAN deadenylation complex subunit 3</shortName>
    </alternativeName>
</protein>
<accession>Q640Q5</accession>
<accession>H3BKF3</accession>
<accession>Q3U5F2</accession>
<accession>Q8CE75</accession>
<accession>Q9CZM6</accession>
<name>PAN3_MOUSE</name>
<proteinExistence type="evidence at protein level"/>
<sequence length="887" mass="95451">MNSGGGGGLPPPSAAASPSSSSLAAAVAVAVAASSGVGGVPGGPAAAAGVKLKYCRYYAKDKTCFYGEECQFLHEDPAAGAAPGLGLHSNSVPLALAAAAGAAFPPGALPGGGAGPPAGPKKPELGVPGAATAGGGLDGPRVAIPGMDGGALTDASLTESYFSTSFIGVNGFGSPVETKYPLMQRMTSSSSSPSLLNDSAKPYTGHDLLTSSASSLFNDFGALNISQRRKPRKYRLGMLEERLVPMGSQARKAKNPLGCLADRCESGVPVSMVWWDRVPENNLQTPNPTASEFIPKGGSTSRLSNVSQSNMSAFSQVFSHPSMGSPATAGLAPGMSLSAGSSPLHSPKITPHTSPAPRRRSHTPNPASFMVPPSASTPANNPAPQPPSSGQVIQKETVGGTTYFYTDTTPAPLTGMVFPNYHIYPPTAPHVAYMQPKANAPSFFMADELRQELINRHLITMAQIDQADMPAVPTEVDSYHSLFPLEPLPPPNRIQKSSNFGYITSCYKAVNSKDDLPYCLRRIHGFRLVNTKCMVLVDMWKKIQHSNIVTLREVFTTKAFAEPSLVFAYDFHAGGETMMSRHFNDPNSDAYFTKRKWGQHDGPLPRQHAGLLPESLIWAYIVQLSSALRTIHTAGLACRVMDPTKILITSKTRLRVNCVGVFDVLTFDNSQNNNPLALMAQYQQADLISLGKVVLALACNSLAGIQRENLQKAMELVTINYSSDLKNLILYLLTDQNRMRSVNDIMPMIGARFYTQLDAAQMRNDVIEEDLAKEVQNGRLFRLLAKLGTINERPEFQKDPTWSETGDRYLLKLFRDHLFHQVTEAGAPWIDLSHIISCLNKLDAGVPEKISLISRDEKSVLVVTYSDLKRCFENTFQELIAAANGQL</sequence>
<feature type="chain" id="PRO_0000280526" description="PAN2-PAN3 deadenylation complex subunit Pan3">
    <location>
        <begin position="1"/>
        <end position="887"/>
    </location>
</feature>
<feature type="zinc finger region" description="C3H1-type" evidence="2">
    <location>
        <begin position="49"/>
        <end position="77"/>
    </location>
</feature>
<feature type="region of interest" description="Disordered" evidence="3">
    <location>
        <begin position="111"/>
        <end position="139"/>
    </location>
</feature>
<feature type="region of interest" description="Necessary and sufficient for interaction with PABPC1 but not needed for interaction with PAN2" evidence="1">
    <location>
        <begin position="147"/>
        <end position="498"/>
    </location>
</feature>
<feature type="region of interest" description="Disordered" evidence="3">
    <location>
        <begin position="280"/>
        <end position="307"/>
    </location>
</feature>
<feature type="region of interest" description="Disordered" evidence="3">
    <location>
        <begin position="321"/>
        <end position="393"/>
    </location>
</feature>
<feature type="region of interest" description="Pseudokinase domain" evidence="2">
    <location>
        <begin position="463"/>
        <end position="750"/>
    </location>
</feature>
<feature type="region of interest" description="Knob domain" evidence="2">
    <location>
        <begin position="789"/>
        <end position="887"/>
    </location>
</feature>
<feature type="short sequence motif" description="PABPC-interacting motif-2 (PAM-2)" evidence="1 2">
    <location>
        <begin position="284"/>
        <end position="299"/>
    </location>
</feature>
<feature type="compositionally biased region" description="Polar residues" evidence="3">
    <location>
        <begin position="281"/>
        <end position="290"/>
    </location>
</feature>
<feature type="compositionally biased region" description="Polar residues" evidence="3">
    <location>
        <begin position="298"/>
        <end position="307"/>
    </location>
</feature>
<feature type="binding site" evidence="2">
    <location>
        <position position="521"/>
    </location>
    <ligand>
        <name>ATP</name>
        <dbReference type="ChEBI" id="CHEBI:30616"/>
    </ligand>
</feature>
<feature type="binding site" evidence="2">
    <location>
        <begin position="570"/>
        <end position="577"/>
    </location>
    <ligand>
        <name>ATP</name>
        <dbReference type="ChEBI" id="CHEBI:30616"/>
    </ligand>
</feature>
<feature type="binding site" evidence="2">
    <location>
        <begin position="644"/>
        <end position="645"/>
    </location>
    <ligand>
        <name>ATP</name>
        <dbReference type="ChEBI" id="CHEBI:30616"/>
    </ligand>
</feature>
<feature type="modified residue" description="Phosphoserine" evidence="1">
    <location>
        <position position="354"/>
    </location>
</feature>
<feature type="modified residue" description="Phosphoserine" evidence="8">
    <location>
        <position position="361"/>
    </location>
</feature>
<feature type="splice variant" id="VSP_061950" description="In isoform 3." evidence="1">
    <location>
        <begin position="231"/>
        <end position="284"/>
    </location>
</feature>
<feature type="splice variant" id="VSP_041650" description="In isoform 2." evidence="6">
    <original>MSLSAGSSPLHSPKITPHTSP</original>
    <variation>NKLPSESALDLKINPTVHETD</variation>
    <location>
        <begin position="335"/>
        <end position="355"/>
    </location>
</feature>
<feature type="splice variant" id="VSP_041651" description="In isoform 2." evidence="6">
    <location>
        <begin position="356"/>
        <end position="887"/>
    </location>
</feature>
<feature type="splice variant" id="VSP_061951" description="In isoform 3.">
    <original>QL</original>
    <variation>NDRNSN</variation>
    <location>
        <begin position="886"/>
        <end position="887"/>
    </location>
</feature>
<gene>
    <name evidence="2" type="primary">Pan3</name>
</gene>
<dbReference type="EMBL" id="AK012409">
    <property type="protein sequence ID" value="BAB28221.1"/>
    <property type="status" value="ALT_SEQ"/>
    <property type="molecule type" value="mRNA"/>
</dbReference>
<dbReference type="EMBL" id="AK028869">
    <property type="protein sequence ID" value="BAC26161.1"/>
    <property type="molecule type" value="mRNA"/>
</dbReference>
<dbReference type="EMBL" id="AK153632">
    <property type="protein sequence ID" value="BAE32127.1"/>
    <property type="status" value="ALT_SEQ"/>
    <property type="molecule type" value="mRNA"/>
</dbReference>
<dbReference type="EMBL" id="AC131730">
    <property type="status" value="NOT_ANNOTATED_CDS"/>
    <property type="molecule type" value="Genomic_DNA"/>
</dbReference>
<dbReference type="EMBL" id="AC134441">
    <property type="status" value="NOT_ANNOTATED_CDS"/>
    <property type="molecule type" value="Genomic_DNA"/>
</dbReference>
<dbReference type="EMBL" id="BC082547">
    <property type="protein sequence ID" value="AAH82547.1"/>
    <property type="status" value="ALT_SEQ"/>
    <property type="molecule type" value="mRNA"/>
</dbReference>
<dbReference type="CCDS" id="CCDS39401.2">
    <molecule id="Q640Q5-1"/>
</dbReference>
<dbReference type="RefSeq" id="NP_001406712.1">
    <molecule id="Q640Q5-5"/>
    <property type="nucleotide sequence ID" value="NM_001419783.1"/>
</dbReference>
<dbReference type="RefSeq" id="NP_082567.3">
    <molecule id="Q640Q5-1"/>
    <property type="nucleotide sequence ID" value="NM_028291.4"/>
</dbReference>
<dbReference type="RefSeq" id="XP_006504933.1">
    <property type="nucleotide sequence ID" value="XM_006504870.3"/>
</dbReference>
<dbReference type="SMR" id="Q640Q5"/>
<dbReference type="BioGRID" id="215454">
    <property type="interactions" value="1"/>
</dbReference>
<dbReference type="FunCoup" id="Q640Q5">
    <property type="interactions" value="3048"/>
</dbReference>
<dbReference type="STRING" id="10090.ENSMUSP00000031651"/>
<dbReference type="GlyGen" id="Q640Q5">
    <property type="glycosylation" value="2 sites, 1 O-linked glycan (1 site)"/>
</dbReference>
<dbReference type="iPTMnet" id="Q640Q5"/>
<dbReference type="PhosphoSitePlus" id="Q640Q5"/>
<dbReference type="PaxDb" id="10090-ENSMUSP00000031651"/>
<dbReference type="PeptideAtlas" id="Q640Q5"/>
<dbReference type="ProteomicsDB" id="295458">
    <molecule id="Q640Q5-1"/>
</dbReference>
<dbReference type="ProteomicsDB" id="295459">
    <molecule id="Q640Q5-2"/>
</dbReference>
<dbReference type="ProteomicsDB" id="363264"/>
<dbReference type="Pumba" id="Q640Q5"/>
<dbReference type="Antibodypedia" id="22704">
    <property type="antibodies" value="136 antibodies from 21 providers"/>
</dbReference>
<dbReference type="DNASU" id="72587"/>
<dbReference type="Ensembl" id="ENSMUST00000031651.15">
    <molecule id="Q640Q5-1"/>
    <property type="protein sequence ID" value="ENSMUSP00000031651.9"/>
    <property type="gene ID" value="ENSMUSG00000029647.16"/>
</dbReference>
<dbReference type="Ensembl" id="ENSMUST00000176600.8">
    <molecule id="Q640Q5-5"/>
    <property type="protein sequence ID" value="ENSMUSP00000135367.2"/>
    <property type="gene ID" value="ENSMUSG00000029647.16"/>
</dbReference>
<dbReference type="GeneID" id="72587"/>
<dbReference type="KEGG" id="mmu:72587"/>
<dbReference type="UCSC" id="uc009aod.2">
    <molecule id="Q640Q5-5"/>
    <property type="organism name" value="mouse"/>
</dbReference>
<dbReference type="AGR" id="MGI:1919837"/>
<dbReference type="CTD" id="255967"/>
<dbReference type="MGI" id="MGI:1919837">
    <property type="gene designation" value="Pan3"/>
</dbReference>
<dbReference type="VEuPathDB" id="HostDB:ENSMUSG00000029647"/>
<dbReference type="eggNOG" id="KOG3741">
    <property type="taxonomic scope" value="Eukaryota"/>
</dbReference>
<dbReference type="GeneTree" id="ENSGT00390000001504"/>
<dbReference type="InParanoid" id="Q640Q5"/>
<dbReference type="OMA" id="ASHVINM"/>
<dbReference type="OrthoDB" id="204958at2759"/>
<dbReference type="TreeFam" id="TF105865"/>
<dbReference type="Reactome" id="R-MMU-429947">
    <property type="pathway name" value="Deadenylation of mRNA"/>
</dbReference>
<dbReference type="BioGRID-ORCS" id="72587">
    <property type="hits" value="2 hits in 79 CRISPR screens"/>
</dbReference>
<dbReference type="ChiTaRS" id="Pan3">
    <property type="organism name" value="mouse"/>
</dbReference>
<dbReference type="PRO" id="PR:Q640Q5"/>
<dbReference type="Proteomes" id="UP000000589">
    <property type="component" value="Chromosome 5"/>
</dbReference>
<dbReference type="RNAct" id="Q640Q5">
    <property type="molecule type" value="protein"/>
</dbReference>
<dbReference type="Bgee" id="ENSMUSG00000029647">
    <property type="expression patterns" value="Expressed in animal zygote and 226 other cell types or tissues"/>
</dbReference>
<dbReference type="ExpressionAtlas" id="Q640Q5">
    <property type="expression patterns" value="baseline and differential"/>
</dbReference>
<dbReference type="GO" id="GO:0005634">
    <property type="term" value="C:nucleus"/>
    <property type="evidence" value="ECO:0007669"/>
    <property type="project" value="UniProtKB-SubCell"/>
</dbReference>
<dbReference type="GO" id="GO:0000932">
    <property type="term" value="C:P-body"/>
    <property type="evidence" value="ECO:0000314"/>
    <property type="project" value="MGI"/>
</dbReference>
<dbReference type="GO" id="GO:0031251">
    <property type="term" value="C:PAN complex"/>
    <property type="evidence" value="ECO:0000250"/>
    <property type="project" value="UniProtKB"/>
</dbReference>
<dbReference type="GO" id="GO:0005524">
    <property type="term" value="F:ATP binding"/>
    <property type="evidence" value="ECO:0007669"/>
    <property type="project" value="UniProtKB-UniRule"/>
</dbReference>
<dbReference type="GO" id="GO:0004535">
    <property type="term" value="F:poly(A)-specific ribonuclease activity"/>
    <property type="evidence" value="ECO:0007669"/>
    <property type="project" value="Ensembl"/>
</dbReference>
<dbReference type="GO" id="GO:0004672">
    <property type="term" value="F:protein kinase activity"/>
    <property type="evidence" value="ECO:0007669"/>
    <property type="project" value="InterPro"/>
</dbReference>
<dbReference type="GO" id="GO:0003723">
    <property type="term" value="F:RNA binding"/>
    <property type="evidence" value="ECO:0007669"/>
    <property type="project" value="InterPro"/>
</dbReference>
<dbReference type="GO" id="GO:0008270">
    <property type="term" value="F:zinc ion binding"/>
    <property type="evidence" value="ECO:0007669"/>
    <property type="project" value="UniProtKB-KW"/>
</dbReference>
<dbReference type="GO" id="GO:0000290">
    <property type="term" value="P:deadenylation-dependent decapping of nuclear-transcribed mRNA"/>
    <property type="evidence" value="ECO:0000315"/>
    <property type="project" value="MGI"/>
</dbReference>
<dbReference type="GO" id="GO:0006397">
    <property type="term" value="P:mRNA processing"/>
    <property type="evidence" value="ECO:0007669"/>
    <property type="project" value="UniProtKB-KW"/>
</dbReference>
<dbReference type="GO" id="GO:0000289">
    <property type="term" value="P:nuclear-transcribed mRNA poly(A) tail shortening"/>
    <property type="evidence" value="ECO:0007669"/>
    <property type="project" value="UniProtKB-UniRule"/>
</dbReference>
<dbReference type="GO" id="GO:0010606">
    <property type="term" value="P:positive regulation of cytoplasmic mRNA processing body assembly"/>
    <property type="evidence" value="ECO:0000314"/>
    <property type="project" value="MGI"/>
</dbReference>
<dbReference type="GO" id="GO:0006605">
    <property type="term" value="P:protein targeting"/>
    <property type="evidence" value="ECO:0000314"/>
    <property type="project" value="MGI"/>
</dbReference>
<dbReference type="FunFam" id="1.10.287.3700:FF:000001">
    <property type="entry name" value="PAN2-PAN3 deadenylation complex subunit PAN3"/>
    <property type="match status" value="1"/>
</dbReference>
<dbReference type="FunFam" id="1.10.510.10:FF:000168">
    <property type="entry name" value="PAN2-PAN3 deadenylation complex subunit PAN3"/>
    <property type="match status" value="1"/>
</dbReference>
<dbReference type="FunFam" id="1.20.5.5160:FF:000001">
    <property type="entry name" value="PAN2-PAN3 deadenylation complex subunit PAN3"/>
    <property type="match status" value="1"/>
</dbReference>
<dbReference type="Gene3D" id="1.10.287.3700">
    <property type="match status" value="1"/>
</dbReference>
<dbReference type="Gene3D" id="1.20.5.5160">
    <property type="match status" value="1"/>
</dbReference>
<dbReference type="Gene3D" id="1.10.510.10">
    <property type="entry name" value="Transferase(Phosphotransferase) domain 1"/>
    <property type="match status" value="1"/>
</dbReference>
<dbReference type="HAMAP" id="MF_03181">
    <property type="entry name" value="PAN3"/>
    <property type="match status" value="1"/>
</dbReference>
<dbReference type="InterPro" id="IPR011009">
    <property type="entry name" value="Kinase-like_dom_sf"/>
</dbReference>
<dbReference type="InterPro" id="IPR030844">
    <property type="entry name" value="PAN3"/>
</dbReference>
<dbReference type="InterPro" id="IPR041332">
    <property type="entry name" value="Pan3_PK"/>
</dbReference>
<dbReference type="InterPro" id="IPR000719">
    <property type="entry name" value="Prot_kinase_dom"/>
</dbReference>
<dbReference type="InterPro" id="IPR000571">
    <property type="entry name" value="Znf_CCCH"/>
</dbReference>
<dbReference type="InterPro" id="IPR036855">
    <property type="entry name" value="Znf_CCCH_sf"/>
</dbReference>
<dbReference type="PANTHER" id="PTHR12272">
    <property type="entry name" value="DEADENYLATION COMPLEX SUBUNIT PAN3"/>
    <property type="match status" value="1"/>
</dbReference>
<dbReference type="PANTHER" id="PTHR12272:SF11">
    <property type="entry name" value="PAN2-PAN3 DEADENYLATION COMPLEX SUBUNIT PAN3"/>
    <property type="match status" value="1"/>
</dbReference>
<dbReference type="Pfam" id="PF18101">
    <property type="entry name" value="Pan3_PK"/>
    <property type="match status" value="1"/>
</dbReference>
<dbReference type="SMART" id="SM00220">
    <property type="entry name" value="S_TKc"/>
    <property type="match status" value="1"/>
</dbReference>
<dbReference type="SMART" id="SM00356">
    <property type="entry name" value="ZnF_C3H1"/>
    <property type="match status" value="1"/>
</dbReference>
<dbReference type="SUPFAM" id="SSF90229">
    <property type="entry name" value="CCCH zinc finger"/>
    <property type="match status" value="1"/>
</dbReference>
<dbReference type="SUPFAM" id="SSF56112">
    <property type="entry name" value="Protein kinase-like (PK-like)"/>
    <property type="match status" value="1"/>
</dbReference>
<dbReference type="PROSITE" id="PS50011">
    <property type="entry name" value="PROTEIN_KINASE_DOM"/>
    <property type="match status" value="1"/>
</dbReference>
<dbReference type="PROSITE" id="PS50103">
    <property type="entry name" value="ZF_C3H1"/>
    <property type="match status" value="1"/>
</dbReference>
<keyword id="KW-0025">Alternative splicing</keyword>
<keyword id="KW-0067">ATP-binding</keyword>
<keyword id="KW-0175">Coiled coil</keyword>
<keyword id="KW-0963">Cytoplasm</keyword>
<keyword id="KW-0479">Metal-binding</keyword>
<keyword id="KW-0507">mRNA processing</keyword>
<keyword id="KW-0547">Nucleotide-binding</keyword>
<keyword id="KW-0539">Nucleus</keyword>
<keyword id="KW-0597">Phosphoprotein</keyword>
<keyword id="KW-1185">Reference proteome</keyword>
<keyword id="KW-0862">Zinc</keyword>
<keyword id="KW-0863">Zinc-finger</keyword>
<organism>
    <name type="scientific">Mus musculus</name>
    <name type="common">Mouse</name>
    <dbReference type="NCBI Taxonomy" id="10090"/>
    <lineage>
        <taxon>Eukaryota</taxon>
        <taxon>Metazoa</taxon>
        <taxon>Chordata</taxon>
        <taxon>Craniata</taxon>
        <taxon>Vertebrata</taxon>
        <taxon>Euteleostomi</taxon>
        <taxon>Mammalia</taxon>
        <taxon>Eutheria</taxon>
        <taxon>Euarchontoglires</taxon>
        <taxon>Glires</taxon>
        <taxon>Rodentia</taxon>
        <taxon>Myomorpha</taxon>
        <taxon>Muroidea</taxon>
        <taxon>Muridae</taxon>
        <taxon>Murinae</taxon>
        <taxon>Mus</taxon>
        <taxon>Mus</taxon>
    </lineage>
</organism>
<reference key="1">
    <citation type="journal article" date="2009" name="PLoS Biol.">
        <title>Lineage-specific biology revealed by a finished genome assembly of the mouse.</title>
        <authorList>
            <person name="Church D.M."/>
            <person name="Goodstadt L."/>
            <person name="Hillier L.W."/>
            <person name="Zody M.C."/>
            <person name="Goldstein S."/>
            <person name="She X."/>
            <person name="Bult C.J."/>
            <person name="Agarwala R."/>
            <person name="Cherry J.L."/>
            <person name="DiCuccio M."/>
            <person name="Hlavina W."/>
            <person name="Kapustin Y."/>
            <person name="Meric P."/>
            <person name="Maglott D."/>
            <person name="Birtle Z."/>
            <person name="Marques A.C."/>
            <person name="Graves T."/>
            <person name="Zhou S."/>
            <person name="Teague B."/>
            <person name="Potamousis K."/>
            <person name="Churas C."/>
            <person name="Place M."/>
            <person name="Herschleb J."/>
            <person name="Runnheim R."/>
            <person name="Forrest D."/>
            <person name="Amos-Landgraf J."/>
            <person name="Schwartz D.C."/>
            <person name="Cheng Z."/>
            <person name="Lindblad-Toh K."/>
            <person name="Eichler E.E."/>
            <person name="Ponting C.P."/>
        </authorList>
    </citation>
    <scope>NUCLEOTIDE SEQUENCE [LARGE SCALE GENOMIC DNA]</scope>
    <source>
        <strain>C57BL/6J</strain>
    </source>
</reference>
<reference key="2">
    <citation type="journal article" date="2005" name="Science">
        <title>The transcriptional landscape of the mammalian genome.</title>
        <authorList>
            <person name="Carninci P."/>
            <person name="Kasukawa T."/>
            <person name="Katayama S."/>
            <person name="Gough J."/>
            <person name="Frith M.C."/>
            <person name="Maeda N."/>
            <person name="Oyama R."/>
            <person name="Ravasi T."/>
            <person name="Lenhard B."/>
            <person name="Wells C."/>
            <person name="Kodzius R."/>
            <person name="Shimokawa K."/>
            <person name="Bajic V.B."/>
            <person name="Brenner S.E."/>
            <person name="Batalov S."/>
            <person name="Forrest A.R."/>
            <person name="Zavolan M."/>
            <person name="Davis M.J."/>
            <person name="Wilming L.G."/>
            <person name="Aidinis V."/>
            <person name="Allen J.E."/>
            <person name="Ambesi-Impiombato A."/>
            <person name="Apweiler R."/>
            <person name="Aturaliya R.N."/>
            <person name="Bailey T.L."/>
            <person name="Bansal M."/>
            <person name="Baxter L."/>
            <person name="Beisel K.W."/>
            <person name="Bersano T."/>
            <person name="Bono H."/>
            <person name="Chalk A.M."/>
            <person name="Chiu K.P."/>
            <person name="Choudhary V."/>
            <person name="Christoffels A."/>
            <person name="Clutterbuck D.R."/>
            <person name="Crowe M.L."/>
            <person name="Dalla E."/>
            <person name="Dalrymple B.P."/>
            <person name="de Bono B."/>
            <person name="Della Gatta G."/>
            <person name="di Bernardo D."/>
            <person name="Down T."/>
            <person name="Engstrom P."/>
            <person name="Fagiolini M."/>
            <person name="Faulkner G."/>
            <person name="Fletcher C.F."/>
            <person name="Fukushima T."/>
            <person name="Furuno M."/>
            <person name="Futaki S."/>
            <person name="Gariboldi M."/>
            <person name="Georgii-Hemming P."/>
            <person name="Gingeras T.R."/>
            <person name="Gojobori T."/>
            <person name="Green R.E."/>
            <person name="Gustincich S."/>
            <person name="Harbers M."/>
            <person name="Hayashi Y."/>
            <person name="Hensch T.K."/>
            <person name="Hirokawa N."/>
            <person name="Hill D."/>
            <person name="Huminiecki L."/>
            <person name="Iacono M."/>
            <person name="Ikeo K."/>
            <person name="Iwama A."/>
            <person name="Ishikawa T."/>
            <person name="Jakt M."/>
            <person name="Kanapin A."/>
            <person name="Katoh M."/>
            <person name="Kawasawa Y."/>
            <person name="Kelso J."/>
            <person name="Kitamura H."/>
            <person name="Kitano H."/>
            <person name="Kollias G."/>
            <person name="Krishnan S.P."/>
            <person name="Kruger A."/>
            <person name="Kummerfeld S.K."/>
            <person name="Kurochkin I.V."/>
            <person name="Lareau L.F."/>
            <person name="Lazarevic D."/>
            <person name="Lipovich L."/>
            <person name="Liu J."/>
            <person name="Liuni S."/>
            <person name="McWilliam S."/>
            <person name="Madan Babu M."/>
            <person name="Madera M."/>
            <person name="Marchionni L."/>
            <person name="Matsuda H."/>
            <person name="Matsuzawa S."/>
            <person name="Miki H."/>
            <person name="Mignone F."/>
            <person name="Miyake S."/>
            <person name="Morris K."/>
            <person name="Mottagui-Tabar S."/>
            <person name="Mulder N."/>
            <person name="Nakano N."/>
            <person name="Nakauchi H."/>
            <person name="Ng P."/>
            <person name="Nilsson R."/>
            <person name="Nishiguchi S."/>
            <person name="Nishikawa S."/>
            <person name="Nori F."/>
            <person name="Ohara O."/>
            <person name="Okazaki Y."/>
            <person name="Orlando V."/>
            <person name="Pang K.C."/>
            <person name="Pavan W.J."/>
            <person name="Pavesi G."/>
            <person name="Pesole G."/>
            <person name="Petrovsky N."/>
            <person name="Piazza S."/>
            <person name="Reed J."/>
            <person name="Reid J.F."/>
            <person name="Ring B.Z."/>
            <person name="Ringwald M."/>
            <person name="Rost B."/>
            <person name="Ruan Y."/>
            <person name="Salzberg S.L."/>
            <person name="Sandelin A."/>
            <person name="Schneider C."/>
            <person name="Schoenbach C."/>
            <person name="Sekiguchi K."/>
            <person name="Semple C.A."/>
            <person name="Seno S."/>
            <person name="Sessa L."/>
            <person name="Sheng Y."/>
            <person name="Shibata Y."/>
            <person name="Shimada H."/>
            <person name="Shimada K."/>
            <person name="Silva D."/>
            <person name="Sinclair B."/>
            <person name="Sperling S."/>
            <person name="Stupka E."/>
            <person name="Sugiura K."/>
            <person name="Sultana R."/>
            <person name="Takenaka Y."/>
            <person name="Taki K."/>
            <person name="Tammoja K."/>
            <person name="Tan S.L."/>
            <person name="Tang S."/>
            <person name="Taylor M.S."/>
            <person name="Tegner J."/>
            <person name="Teichmann S.A."/>
            <person name="Ueda H.R."/>
            <person name="van Nimwegen E."/>
            <person name="Verardo R."/>
            <person name="Wei C.L."/>
            <person name="Yagi K."/>
            <person name="Yamanishi H."/>
            <person name="Zabarovsky E."/>
            <person name="Zhu S."/>
            <person name="Zimmer A."/>
            <person name="Hide W."/>
            <person name="Bult C."/>
            <person name="Grimmond S.M."/>
            <person name="Teasdale R.D."/>
            <person name="Liu E.T."/>
            <person name="Brusic V."/>
            <person name="Quackenbush J."/>
            <person name="Wahlestedt C."/>
            <person name="Mattick J.S."/>
            <person name="Hume D.A."/>
            <person name="Kai C."/>
            <person name="Sasaki D."/>
            <person name="Tomaru Y."/>
            <person name="Fukuda S."/>
            <person name="Kanamori-Katayama M."/>
            <person name="Suzuki M."/>
            <person name="Aoki J."/>
            <person name="Arakawa T."/>
            <person name="Iida J."/>
            <person name="Imamura K."/>
            <person name="Itoh M."/>
            <person name="Kato T."/>
            <person name="Kawaji H."/>
            <person name="Kawagashira N."/>
            <person name="Kawashima T."/>
            <person name="Kojima M."/>
            <person name="Kondo S."/>
            <person name="Konno H."/>
            <person name="Nakano K."/>
            <person name="Ninomiya N."/>
            <person name="Nishio T."/>
            <person name="Okada M."/>
            <person name="Plessy C."/>
            <person name="Shibata K."/>
            <person name="Shiraki T."/>
            <person name="Suzuki S."/>
            <person name="Tagami M."/>
            <person name="Waki K."/>
            <person name="Watahiki A."/>
            <person name="Okamura-Oho Y."/>
            <person name="Suzuki H."/>
            <person name="Kawai J."/>
            <person name="Hayashizaki Y."/>
        </authorList>
    </citation>
    <scope>NUCLEOTIDE SEQUENCE [LARGE SCALE MRNA] OF 1-347 AND 598-837 (ISOFORM 3)</scope>
    <source>
        <strain>C57BL/6J</strain>
        <tissue>Embryo</tissue>
        <tissue>Skin</tissue>
        <tissue>Thymus</tissue>
    </source>
</reference>
<reference key="3">
    <citation type="journal article" date="2004" name="Genome Res.">
        <title>The status, quality, and expansion of the NIH full-length cDNA project: the Mammalian Gene Collection (MGC).</title>
        <authorList>
            <consortium name="The MGC Project Team"/>
        </authorList>
    </citation>
    <scope>NUCLEOTIDE SEQUENCE [LARGE SCALE MRNA] (ISOFORM 2)</scope>
    <source>
        <strain>C57BL/6J</strain>
        <tissue>Brain</tissue>
        <tissue>Mammary tumor</tissue>
    </source>
</reference>
<reference key="4">
    <citation type="journal article" date="2008" name="J. Cell Biol.">
        <title>Deadenylation is prerequisite for P-body formation and mRNA decay in mammalian cells.</title>
        <authorList>
            <person name="Zheng D."/>
            <person name="Ezzeddine N."/>
            <person name="Chen C.Y."/>
            <person name="Zhu W."/>
            <person name="He X."/>
            <person name="Shyu A.B."/>
        </authorList>
    </citation>
    <scope>SUBCELLULAR LOCATION</scope>
</reference>
<reference key="5">
    <citation type="journal article" date="2010" name="Cell">
        <title>A tissue-specific atlas of mouse protein phosphorylation and expression.</title>
        <authorList>
            <person name="Huttlin E.L."/>
            <person name="Jedrychowski M.P."/>
            <person name="Elias J.E."/>
            <person name="Goswami T."/>
            <person name="Rad R."/>
            <person name="Beausoleil S.A."/>
            <person name="Villen J."/>
            <person name="Haas W."/>
            <person name="Sowa M.E."/>
            <person name="Gygi S.P."/>
        </authorList>
    </citation>
    <scope>PHOSPHORYLATION [LARGE SCALE ANALYSIS] AT SER-361</scope>
    <scope>IDENTIFICATION BY MASS SPECTROMETRY [LARGE SCALE ANALYSIS]</scope>
    <source>
        <tissue>Kidney</tissue>
        <tissue>Lung</tissue>
        <tissue>Spleen</tissue>
    </source>
</reference>
<reference key="6">
    <citation type="journal article" date="2020" name="Cell Rep.">
        <title>YTHDF2/3 are required for somatic reprogramming through different RNA deadenylation pathways.</title>
        <authorList>
            <person name="Liu J."/>
            <person name="Gao M."/>
            <person name="Xu S."/>
            <person name="Chen Y."/>
            <person name="Wu K."/>
            <person name="Liu H."/>
            <person name="Wang J."/>
            <person name="Yang X."/>
            <person name="Wang J."/>
            <person name="Liu W."/>
            <person name="Bao X."/>
            <person name="Chen J."/>
        </authorList>
    </citation>
    <scope>INTERACTION WITH YTHDF3</scope>
</reference>
<comment type="function">
    <text evidence="1">Regulatory subunit of the poly(A)-nuclease (PAN) deadenylation complex, one of two cytoplasmic mRNA deadenylases involved in general and miRNA-mediated mRNA turnover. PAN specifically shortens poly(A) tails of RNA and the activity is stimulated by poly(A)-binding protein (PABP). PAN deadenylation is followed by rapid degradation of the shortened mRNA tails by the CCR4-NOT complex. Deadenylated mRNAs are then degraded by two alternative mechanisms, namely exosome-mediated 3'-5' exonucleolytic degradation, or deadenylation-dependent mRNA decapping and subsequent 5'-3' exonucleolytic degradation by XRN1. PAN3 acts as a regulator for PAN activity, recruiting the catalytic subunit PAN2 to mRNA via its interaction with RNA and PABP, and to miRNA targets via its interaction with GW182 family proteins.</text>
</comment>
<comment type="function">
    <molecule>Isoform 1</molecule>
    <text evidence="1">Decreases PAN2-mediated deadenylation, possibly by preventing progression into the second CCR4-NOT mediated stage of biphasic deadenylation. Has a significant effect on mRNA stability, generally stabilizing a subset of the transcriptome. Stabilizes mRNAs degraded by the AU-rich element (ARE)-mediated mRNA decay pathway but promotes degradation of mRNAs by the microRNA-mediated pathway. Its activity influences mRNP remodeling, specifically reducing formation of a subset of P-bodies containing GW220, an isoform of TNRC6A.</text>
</comment>
<comment type="function">
    <molecule>Isoform 3</molecule>
    <text evidence="1">Enhances PAN2 deadenylase activity and has an extensive effect on mRNA stability, generally enhancing mRNA decay across the transcriptome by multiple pathways, including the AU-rich element (ARE)-mediated pathway, microRNA-mediated pathway and the nonsense-mediated pathway (NMD). Its activity is required for efficient P-body formation. May be involved in regulating mRNAs of genes involved in cell cycle progression and cell proliferation.</text>
</comment>
<comment type="subunit">
    <text evidence="2 5">Homodimer. Forms a heterotrimer with a catalytic subunit PAN2 to form the poly(A)-nuclease (PAN) deadenylation complex. Interacts (via PAM-2 motif) with poly(A)-binding protein PABPC1 (via PABC domain), conferring substrate specificity of the enzyme complex. Interacts with the GW182 family proteins TNRC6A, TNRC6B and TNRC6C (By similarity). Interacts with YTHDF3 (PubMed:32905781).</text>
</comment>
<comment type="subunit">
    <molecule>Isoform 1</molecule>
    <text evidence="1">Interacts with PAN2. Interacts (via N-terminus) with PABPC1 at lower efficiency than isoform 3.</text>
</comment>
<comment type="subunit">
    <molecule>Isoform 3</molecule>
    <text evidence="1">Interacts with PAN2. Interacts (via N-terminus) with PABPC1 at higher efficiency than isoform 1.</text>
</comment>
<comment type="subcellular location">
    <subcellularLocation>
        <location evidence="2 4">Cytoplasm</location>
        <location evidence="2 4">P-body</location>
    </subcellularLocation>
</comment>
<comment type="subcellular location">
    <molecule>Isoform 1</molecule>
    <subcellularLocation>
        <location evidence="1">Cytoplasm</location>
    </subcellularLocation>
    <subcellularLocation>
        <location evidence="1">Nucleus</location>
    </subcellularLocation>
    <text evidence="1">Shuttles between cytoplasm and nucleus.</text>
</comment>
<comment type="subcellular location">
    <molecule>Isoform 3</molecule>
    <subcellularLocation>
        <location evidence="1">Cytoplasm</location>
    </subcellularLocation>
</comment>
<comment type="alternative products">
    <event type="alternative splicing"/>
    <isoform>
        <id>Q640Q5-5</id>
        <name>1</name>
        <name evidence="1">Pan3L</name>
        <sequence type="displayed"/>
    </isoform>
    <isoform>
        <id>Q640Q5-1</id>
        <name>3</name>
        <name evidence="1">Pan3S</name>
        <sequence type="described" ref="VSP_061950 VSP_061951"/>
    </isoform>
    <isoform>
        <id>Q640Q5-2</id>
        <name>2</name>
        <sequence type="described" ref="VSP_041650 VSP_041651"/>
    </isoform>
</comment>
<comment type="domain">
    <text evidence="2">The N-terminal zinc finger binds to poly(A) RNA.</text>
</comment>
<comment type="domain">
    <text evidence="2">Contains a pseudokinase domain. The protein kinase domain is predicted to be catalytically inactive because some of the residues important for catalytic activity are substituted and it lacks the equivalent of the binding site for a peptide substrate. However, it has retained an ATP-binding site and ATP-binding is required for mRNA degradation, stimulating the activity of the PAN2 nuclease in vitro. The nucleotide-binding site is juxtaposed to the RNase active site of PAN2 in the complex and may actually bind nucleosides of a poly(A) RNA rather than ATP, feeding the poly(A)-tail to the active site of the deadenylase and thus increasing the efficiency with which this distributive enzyme degrades oligo(A) RNAs.</text>
</comment>
<comment type="domain">
    <text evidence="2">The pseudokinase domain, the coiled-coil (CC), and C-terminal knob domain (CK) form a structural unit (PKC) that forms an extensive high-affinity interaction surface for PAN2.</text>
</comment>
<comment type="miscellaneous">
    <molecule>Isoform 2</molecule>
    <text evidence="7">May be produced at very low levels due to a premature stop codon in the mRNA, leading to nonsense-mediated mRNA decay.</text>
</comment>
<comment type="similarity">
    <text evidence="2">Belongs to the protein kinase superfamily. PAN3 family.</text>
</comment>
<comment type="sequence caution" evidence="7">
    <conflict type="erroneous translation">
        <sequence resource="EMBL-CDS" id="AAH82547"/>
    </conflict>
    <text>Wrong choice of CDS.</text>
</comment>
<comment type="sequence caution" evidence="7">
    <conflict type="miscellaneous discrepancy">
        <sequence resource="EMBL-CDS" id="BAB28221"/>
    </conflict>
    <text>Intron retention.</text>
</comment>
<comment type="sequence caution" evidence="7">
    <conflict type="miscellaneous discrepancy">
        <sequence resource="EMBL-CDS" id="BAE32127"/>
    </conflict>
    <text>Several sequencing errors.</text>
</comment>